<name>ARLY1_RHILO</name>
<organism>
    <name type="scientific">Mesorhizobium japonicum (strain LMG 29417 / CECT 9101 / MAFF 303099)</name>
    <name type="common">Mesorhizobium loti (strain MAFF 303099)</name>
    <dbReference type="NCBI Taxonomy" id="266835"/>
    <lineage>
        <taxon>Bacteria</taxon>
        <taxon>Pseudomonadati</taxon>
        <taxon>Pseudomonadota</taxon>
        <taxon>Alphaproteobacteria</taxon>
        <taxon>Hyphomicrobiales</taxon>
        <taxon>Phyllobacteriaceae</taxon>
        <taxon>Mesorhizobium</taxon>
    </lineage>
</organism>
<protein>
    <recommendedName>
        <fullName evidence="1">Argininosuccinate lyase 1</fullName>
        <shortName evidence="1">ASAL 1</shortName>
        <ecNumber evidence="1">4.3.2.1</ecNumber>
    </recommendedName>
    <alternativeName>
        <fullName evidence="1">Arginosuccinase 1</fullName>
    </alternativeName>
</protein>
<reference key="1">
    <citation type="journal article" date="2000" name="DNA Res.">
        <title>Complete genome structure of the nitrogen-fixing symbiotic bacterium Mesorhizobium loti.</title>
        <authorList>
            <person name="Kaneko T."/>
            <person name="Nakamura Y."/>
            <person name="Sato S."/>
            <person name="Asamizu E."/>
            <person name="Kato T."/>
            <person name="Sasamoto S."/>
            <person name="Watanabe A."/>
            <person name="Idesawa K."/>
            <person name="Ishikawa A."/>
            <person name="Kawashima K."/>
            <person name="Kimura T."/>
            <person name="Kishida Y."/>
            <person name="Kiyokawa C."/>
            <person name="Kohara M."/>
            <person name="Matsumoto M."/>
            <person name="Matsuno A."/>
            <person name="Mochizuki Y."/>
            <person name="Nakayama S."/>
            <person name="Nakazaki N."/>
            <person name="Shimpo S."/>
            <person name="Sugimoto M."/>
            <person name="Takeuchi C."/>
            <person name="Yamada M."/>
            <person name="Tabata S."/>
        </authorList>
    </citation>
    <scope>NUCLEOTIDE SEQUENCE [LARGE SCALE GENOMIC DNA]</scope>
    <source>
        <strain>LMG 29417 / CECT 9101 / MAFF 303099</strain>
    </source>
</reference>
<comment type="catalytic activity">
    <reaction evidence="1">
        <text>2-(N(omega)-L-arginino)succinate = fumarate + L-arginine</text>
        <dbReference type="Rhea" id="RHEA:24020"/>
        <dbReference type="ChEBI" id="CHEBI:29806"/>
        <dbReference type="ChEBI" id="CHEBI:32682"/>
        <dbReference type="ChEBI" id="CHEBI:57472"/>
        <dbReference type="EC" id="4.3.2.1"/>
    </reaction>
</comment>
<comment type="pathway">
    <text evidence="1">Amino-acid biosynthesis; L-arginine biosynthesis; L-arginine from L-ornithine and carbamoyl phosphate: step 3/3.</text>
</comment>
<comment type="subcellular location">
    <subcellularLocation>
        <location evidence="1">Cytoplasm</location>
    </subcellularLocation>
</comment>
<comment type="similarity">
    <text evidence="1">Belongs to the lyase 1 family. Argininosuccinate lyase subfamily.</text>
</comment>
<proteinExistence type="inferred from homology"/>
<accession>Q98G36</accession>
<sequence>MSDKKTSNQMWGGRFASGPAAIMEAINASISFDRKLYAQDIRGSIAHSEMLAQTGIISTADQEKIAHGLNTILKEIEAGSFEFSTRLEDIHMNVEARLADLIGSAAGRLHTARSRNDQVAVDLRLWVKDECFRVAEALKGLITALLARAEEHAATVMPGFTHMQAAQPVTFGHHCMAYVEMFARDLSRVRDAIERMDESPLGAAALAGTSFPIDRHRTAKALGFREPMRNSLDSVSDRDFALDFLAMAAICATHLSRLAEEIIIWSTPQFGFIRLSDSFSTGSSIMPQKKNPDAAELVRGKTGRVNGHLVGLLTVMKGMPLTYGKDMQEDKESVFDAAETLDLMLAAMTGMVSDMTVNAAAMKKAAGSGHATATDLADWLVRTLGLPFREAHHVTGRAVALAEEKKVSLEKLSLEDLQSINPGITADIFSVLAVQNSVKSRTSFGGTAPSEVRKQIRYWKKRLAKA</sequence>
<gene>
    <name evidence="1" type="primary">argH1</name>
    <name type="ordered locus">mlr3506</name>
</gene>
<dbReference type="EC" id="4.3.2.1" evidence="1"/>
<dbReference type="EMBL" id="BA000012">
    <property type="protein sequence ID" value="BAB50380.1"/>
    <property type="molecule type" value="Genomic_DNA"/>
</dbReference>
<dbReference type="SMR" id="Q98G36"/>
<dbReference type="KEGG" id="mlo:mlr3506"/>
<dbReference type="PATRIC" id="fig|266835.9.peg.2792"/>
<dbReference type="eggNOG" id="COG0165">
    <property type="taxonomic scope" value="Bacteria"/>
</dbReference>
<dbReference type="HOGENOM" id="CLU_027272_2_3_5"/>
<dbReference type="UniPathway" id="UPA00068">
    <property type="reaction ID" value="UER00114"/>
</dbReference>
<dbReference type="Proteomes" id="UP000000552">
    <property type="component" value="Chromosome"/>
</dbReference>
<dbReference type="GO" id="GO:0005829">
    <property type="term" value="C:cytosol"/>
    <property type="evidence" value="ECO:0007669"/>
    <property type="project" value="TreeGrafter"/>
</dbReference>
<dbReference type="GO" id="GO:0004056">
    <property type="term" value="F:argininosuccinate lyase activity"/>
    <property type="evidence" value="ECO:0007669"/>
    <property type="project" value="UniProtKB-UniRule"/>
</dbReference>
<dbReference type="GO" id="GO:0042450">
    <property type="term" value="P:arginine biosynthetic process via ornithine"/>
    <property type="evidence" value="ECO:0007669"/>
    <property type="project" value="InterPro"/>
</dbReference>
<dbReference type="GO" id="GO:0006526">
    <property type="term" value="P:L-arginine biosynthetic process"/>
    <property type="evidence" value="ECO:0007669"/>
    <property type="project" value="UniProtKB-UniRule"/>
</dbReference>
<dbReference type="CDD" id="cd01359">
    <property type="entry name" value="Argininosuccinate_lyase"/>
    <property type="match status" value="1"/>
</dbReference>
<dbReference type="FunFam" id="1.10.275.10:FF:000002">
    <property type="entry name" value="Argininosuccinate lyase"/>
    <property type="match status" value="1"/>
</dbReference>
<dbReference type="FunFam" id="1.10.40.30:FF:000001">
    <property type="entry name" value="Argininosuccinate lyase"/>
    <property type="match status" value="1"/>
</dbReference>
<dbReference type="FunFam" id="1.20.200.10:FF:000015">
    <property type="entry name" value="argininosuccinate lyase isoform X2"/>
    <property type="match status" value="1"/>
</dbReference>
<dbReference type="Gene3D" id="1.10.40.30">
    <property type="entry name" value="Fumarase/aspartase (C-terminal domain)"/>
    <property type="match status" value="1"/>
</dbReference>
<dbReference type="Gene3D" id="1.20.200.10">
    <property type="entry name" value="Fumarase/aspartase (Central domain)"/>
    <property type="match status" value="1"/>
</dbReference>
<dbReference type="Gene3D" id="1.10.275.10">
    <property type="entry name" value="Fumarase/aspartase (N-terminal domain)"/>
    <property type="match status" value="1"/>
</dbReference>
<dbReference type="HAMAP" id="MF_00006">
    <property type="entry name" value="Arg_succ_lyase"/>
    <property type="match status" value="1"/>
</dbReference>
<dbReference type="InterPro" id="IPR029419">
    <property type="entry name" value="Arg_succ_lyase_C"/>
</dbReference>
<dbReference type="InterPro" id="IPR009049">
    <property type="entry name" value="Argininosuccinate_lyase"/>
</dbReference>
<dbReference type="InterPro" id="IPR024083">
    <property type="entry name" value="Fumarase/histidase_N"/>
</dbReference>
<dbReference type="InterPro" id="IPR020557">
    <property type="entry name" value="Fumarate_lyase_CS"/>
</dbReference>
<dbReference type="InterPro" id="IPR000362">
    <property type="entry name" value="Fumarate_lyase_fam"/>
</dbReference>
<dbReference type="InterPro" id="IPR022761">
    <property type="entry name" value="Fumarate_lyase_N"/>
</dbReference>
<dbReference type="InterPro" id="IPR008948">
    <property type="entry name" value="L-Aspartase-like"/>
</dbReference>
<dbReference type="NCBIfam" id="TIGR00838">
    <property type="entry name" value="argH"/>
    <property type="match status" value="1"/>
</dbReference>
<dbReference type="PANTHER" id="PTHR43814">
    <property type="entry name" value="ARGININOSUCCINATE LYASE"/>
    <property type="match status" value="1"/>
</dbReference>
<dbReference type="PANTHER" id="PTHR43814:SF1">
    <property type="entry name" value="ARGININOSUCCINATE LYASE"/>
    <property type="match status" value="1"/>
</dbReference>
<dbReference type="Pfam" id="PF14698">
    <property type="entry name" value="ASL_C2"/>
    <property type="match status" value="1"/>
</dbReference>
<dbReference type="Pfam" id="PF00206">
    <property type="entry name" value="Lyase_1"/>
    <property type="match status" value="1"/>
</dbReference>
<dbReference type="PRINTS" id="PR00145">
    <property type="entry name" value="ARGSUCLYASE"/>
</dbReference>
<dbReference type="PRINTS" id="PR00149">
    <property type="entry name" value="FUMRATELYASE"/>
</dbReference>
<dbReference type="SUPFAM" id="SSF48557">
    <property type="entry name" value="L-aspartase-like"/>
    <property type="match status" value="1"/>
</dbReference>
<dbReference type="PROSITE" id="PS00163">
    <property type="entry name" value="FUMARATE_LYASES"/>
    <property type="match status" value="1"/>
</dbReference>
<evidence type="ECO:0000255" key="1">
    <source>
        <dbReference type="HAMAP-Rule" id="MF_00006"/>
    </source>
</evidence>
<feature type="chain" id="PRO_0000137810" description="Argininosuccinate lyase 1">
    <location>
        <begin position="1"/>
        <end position="466"/>
    </location>
</feature>
<keyword id="KW-0028">Amino-acid biosynthesis</keyword>
<keyword id="KW-0055">Arginine biosynthesis</keyword>
<keyword id="KW-0963">Cytoplasm</keyword>
<keyword id="KW-0456">Lyase</keyword>